<protein>
    <recommendedName>
        <fullName>Phosphoribosyl pyrophosphate synthase-associated protein 1</fullName>
        <shortName>PRPP synthase-associated protein 1</shortName>
    </recommendedName>
    <alternativeName>
        <fullName>39 kDa phosphoribosypyrophosphate synthase-associated protein</fullName>
        <shortName>PAP39</shortName>
    </alternativeName>
</protein>
<gene>
    <name type="primary">Prpsap1</name>
</gene>
<accession>Q63468</accession>
<accession>Q63417</accession>
<evidence type="ECO:0000250" key="1">
    <source>
        <dbReference type="UniProtKB" id="Q14558"/>
    </source>
</evidence>
<evidence type="ECO:0000305" key="2"/>
<keyword id="KW-0007">Acetylation</keyword>
<keyword id="KW-0903">Direct protein sequencing</keyword>
<keyword id="KW-0545">Nucleotide biosynthesis</keyword>
<keyword id="KW-0597">Phosphoprotein</keyword>
<keyword id="KW-1185">Reference proteome</keyword>
<organism>
    <name type="scientific">Rattus norvegicus</name>
    <name type="common">Rat</name>
    <dbReference type="NCBI Taxonomy" id="10116"/>
    <lineage>
        <taxon>Eukaryota</taxon>
        <taxon>Metazoa</taxon>
        <taxon>Chordata</taxon>
        <taxon>Craniata</taxon>
        <taxon>Vertebrata</taxon>
        <taxon>Euteleostomi</taxon>
        <taxon>Mammalia</taxon>
        <taxon>Eutheria</taxon>
        <taxon>Euarchontoglires</taxon>
        <taxon>Glires</taxon>
        <taxon>Rodentia</taxon>
        <taxon>Myomorpha</taxon>
        <taxon>Muroidea</taxon>
        <taxon>Muridae</taxon>
        <taxon>Murinae</taxon>
        <taxon>Rattus</taxon>
    </lineage>
</organism>
<comment type="function">
    <text>Seems to play a negative regulatory role in 5-phosphoribose 1-diphosphate synthesis.</text>
</comment>
<comment type="subunit">
    <text>Binds to PRPS1 and PRPS2.</text>
</comment>
<comment type="tissue specificity">
    <text>Ubiquitous.</text>
</comment>
<comment type="similarity">
    <text evidence="2">Belongs to the ribose-phosphate pyrophosphokinase family.</text>
</comment>
<proteinExistence type="evidence at protein level"/>
<feature type="chain" id="PRO_0000141081" description="Phosphoribosyl pyrophosphate synthase-associated protein 1">
    <location>
        <begin position="1"/>
        <end position="356"/>
    </location>
</feature>
<feature type="modified residue" description="N-acetylmethionine" evidence="1">
    <location>
        <position position="1"/>
    </location>
</feature>
<feature type="modified residue" description="Phosphoserine" evidence="1">
    <location>
        <position position="177"/>
    </location>
</feature>
<feature type="modified residue" description="Phosphoserine" evidence="1">
    <location>
        <position position="215"/>
    </location>
</feature>
<dbReference type="EMBL" id="D26073">
    <property type="protein sequence ID" value="BAA05068.1"/>
    <property type="molecule type" value="mRNA"/>
</dbReference>
<dbReference type="EMBL" id="D44609">
    <property type="protein sequence ID" value="BAA08075.1"/>
    <property type="molecule type" value="Genomic_DNA"/>
</dbReference>
<dbReference type="PIR" id="A53433">
    <property type="entry name" value="A53433"/>
</dbReference>
<dbReference type="SMR" id="Q63468"/>
<dbReference type="FunCoup" id="Q63468">
    <property type="interactions" value="1481"/>
</dbReference>
<dbReference type="IntAct" id="Q63468">
    <property type="interactions" value="1"/>
</dbReference>
<dbReference type="STRING" id="10116.ENSRNOP00000013573"/>
<dbReference type="iPTMnet" id="Q63468"/>
<dbReference type="PhosphoSitePlus" id="Q63468"/>
<dbReference type="jPOST" id="Q63468"/>
<dbReference type="PaxDb" id="10116-ENSRNOP00000013573"/>
<dbReference type="PeptideAtlas" id="Q63468"/>
<dbReference type="AGR" id="RGD:620206"/>
<dbReference type="RGD" id="620206">
    <property type="gene designation" value="Prpsap1"/>
</dbReference>
<dbReference type="eggNOG" id="KOG1503">
    <property type="taxonomic scope" value="Eukaryota"/>
</dbReference>
<dbReference type="InParanoid" id="Q63468"/>
<dbReference type="PhylomeDB" id="Q63468"/>
<dbReference type="SABIO-RK" id="Q63468"/>
<dbReference type="PRO" id="PR:Q63468"/>
<dbReference type="Proteomes" id="UP000002494">
    <property type="component" value="Unplaced"/>
</dbReference>
<dbReference type="GO" id="GO:0005737">
    <property type="term" value="C:cytoplasm"/>
    <property type="evidence" value="ECO:0000318"/>
    <property type="project" value="GO_Central"/>
</dbReference>
<dbReference type="GO" id="GO:0032991">
    <property type="term" value="C:protein-containing complex"/>
    <property type="evidence" value="ECO:0000314"/>
    <property type="project" value="RGD"/>
</dbReference>
<dbReference type="GO" id="GO:0002189">
    <property type="term" value="C:ribose phosphate diphosphokinase complex"/>
    <property type="evidence" value="ECO:0000314"/>
    <property type="project" value="RGD"/>
</dbReference>
<dbReference type="GO" id="GO:0030234">
    <property type="term" value="F:enzyme regulator activity"/>
    <property type="evidence" value="ECO:0000315"/>
    <property type="project" value="RGD"/>
</dbReference>
<dbReference type="GO" id="GO:0042802">
    <property type="term" value="F:identical protein binding"/>
    <property type="evidence" value="ECO:0000266"/>
    <property type="project" value="RGD"/>
</dbReference>
<dbReference type="GO" id="GO:0019900">
    <property type="term" value="F:kinase binding"/>
    <property type="evidence" value="ECO:0000353"/>
    <property type="project" value="RGD"/>
</dbReference>
<dbReference type="GO" id="GO:0000287">
    <property type="term" value="F:magnesium ion binding"/>
    <property type="evidence" value="ECO:0007669"/>
    <property type="project" value="InterPro"/>
</dbReference>
<dbReference type="GO" id="GO:0006015">
    <property type="term" value="P:5-phosphoribose 1-diphosphate biosynthetic process"/>
    <property type="evidence" value="ECO:0000318"/>
    <property type="project" value="GO_Central"/>
</dbReference>
<dbReference type="GO" id="GO:0006164">
    <property type="term" value="P:purine nucleotide biosynthetic process"/>
    <property type="evidence" value="ECO:0000318"/>
    <property type="project" value="GO_Central"/>
</dbReference>
<dbReference type="CDD" id="cd06223">
    <property type="entry name" value="PRTases_typeI"/>
    <property type="match status" value="1"/>
</dbReference>
<dbReference type="FunFam" id="3.40.50.2020:FF:000012">
    <property type="entry name" value="Phosphoribosyl pyrophosphate synthase-associated protein 2 isoform 1"/>
    <property type="match status" value="1"/>
</dbReference>
<dbReference type="FunFam" id="3.40.50.2020:FF:000014">
    <property type="entry name" value="Ribose-phosphate pyrophosphokinase 1"/>
    <property type="match status" value="1"/>
</dbReference>
<dbReference type="Gene3D" id="3.40.50.2020">
    <property type="match status" value="2"/>
</dbReference>
<dbReference type="InterPro" id="IPR029099">
    <property type="entry name" value="Pribosyltran_N"/>
</dbReference>
<dbReference type="InterPro" id="IPR000836">
    <property type="entry name" value="PRibTrfase_dom"/>
</dbReference>
<dbReference type="InterPro" id="IPR029057">
    <property type="entry name" value="PRTase-like"/>
</dbReference>
<dbReference type="InterPro" id="IPR005946">
    <property type="entry name" value="Rib-P_diPkinase"/>
</dbReference>
<dbReference type="NCBIfam" id="TIGR01251">
    <property type="entry name" value="ribP_PPkin"/>
    <property type="match status" value="1"/>
</dbReference>
<dbReference type="PANTHER" id="PTHR10210:SF28">
    <property type="entry name" value="PHOSPHORIBOSYL PYROPHOSPHATE SYNTHASE-ASSOCIATED PROTEIN 1"/>
    <property type="match status" value="1"/>
</dbReference>
<dbReference type="PANTHER" id="PTHR10210">
    <property type="entry name" value="RIBOSE-PHOSPHATE DIPHOSPHOKINASE FAMILY MEMBER"/>
    <property type="match status" value="1"/>
</dbReference>
<dbReference type="Pfam" id="PF14572">
    <property type="entry name" value="Pribosyl_synth"/>
    <property type="match status" value="1"/>
</dbReference>
<dbReference type="Pfam" id="PF13793">
    <property type="entry name" value="Pribosyltran_N"/>
    <property type="match status" value="1"/>
</dbReference>
<dbReference type="SMART" id="SM01400">
    <property type="entry name" value="Pribosyltran_N"/>
    <property type="match status" value="1"/>
</dbReference>
<dbReference type="SUPFAM" id="SSF53271">
    <property type="entry name" value="PRTase-like"/>
    <property type="match status" value="2"/>
</dbReference>
<name>KPRA_RAT</name>
<reference key="1">
    <citation type="journal article" date="1994" name="J. Biol. Chem.">
        <title>A novel 39-kDa phosphoribosylpyrophosphate synthetase-associated protein of rat liver. Cloning, high sequence similarity to the catalytic subunits, and a negative regulatory role.</title>
        <authorList>
            <person name="Kita K."/>
            <person name="Ishizuka T."/>
            <person name="Ishijima S."/>
            <person name="Sonoda T."/>
            <person name="Tatibana M."/>
        </authorList>
    </citation>
    <scope>NUCLEOTIDE SEQUENCE [MRNA]</scope>
    <scope>PARTIAL PROTEIN SEQUENCE</scope>
    <source>
        <strain>Sprague-Dawley</strain>
        <tissue>Liver</tissue>
    </source>
</reference>
<reference key="2">
    <citation type="journal article" date="1996" name="Biochim. Biophys. Acta">
        <title>Promoter region of the rat phosphoribosylpyrophosphate synthetase-associated protein 39.</title>
        <authorList>
            <person name="Ishizuka T."/>
            <person name="Sawa K."/>
            <person name="Kita K."/>
            <person name="Ino H."/>
            <person name="Sonoda T."/>
            <person name="Suzuki N."/>
            <person name="Tatibana M."/>
        </authorList>
    </citation>
    <scope>NUCLEOTIDE SEQUENCE [GENOMIC DNA] OF 1-67</scope>
    <source>
        <strain>Sprague-Dawley</strain>
        <tissue>Liver</tissue>
    </source>
</reference>
<sequence length="356" mass="39436">MNAARTGYRVFSANSTAACTELAKRITERLGAELGKSVVYQETNGETRVEIKESVRGQDIFIIQTIPRDVNTAVMELLIMAYALKTACARNIIGVIPYFPYSKQSKMRKRGSIVCKLLASMLAKAGLTHIITMDLHQKEIQGFFCFPVDNLRASPFLLQYIQEEIPNYRNAVIVAKSPDAAKRAQSYAERLRLGLAVIHGEAQCTELDMDDGRHSPPMVKNATVHPGLELPLMMAKEKPPITVVGDVGGRIAIIVDDIIDDVESFVAAAETLKERGAYKIYVMATHGILSAEAPRLIEESPIDEVVVTNTVPHELQKLQCPKIKTVDISLILSEAIRRIHNGESMAYLFRNITVDD</sequence>